<gene>
    <name type="ordered locus">CT_580</name>
</gene>
<dbReference type="EMBL" id="AE001273">
    <property type="protein sequence ID" value="AAC68182.1"/>
    <property type="molecule type" value="Genomic_DNA"/>
</dbReference>
<dbReference type="PIR" id="F71497">
    <property type="entry name" value="F71497"/>
</dbReference>
<dbReference type="RefSeq" id="NP_220095.1">
    <property type="nucleotide sequence ID" value="NC_000117.1"/>
</dbReference>
<dbReference type="RefSeq" id="WP_010725258.1">
    <property type="nucleotide sequence ID" value="NC_000117.1"/>
</dbReference>
<dbReference type="SMR" id="O84584"/>
<dbReference type="FunCoup" id="O84584">
    <property type="interactions" value="249"/>
</dbReference>
<dbReference type="STRING" id="272561.CT_580"/>
<dbReference type="EnsemblBacteria" id="AAC68182">
    <property type="protein sequence ID" value="AAC68182"/>
    <property type="gene ID" value="CT_580"/>
</dbReference>
<dbReference type="GeneID" id="884358"/>
<dbReference type="KEGG" id="ctr:CT_580"/>
<dbReference type="PATRIC" id="fig|272561.5.peg.632"/>
<dbReference type="HOGENOM" id="CLU_080359_0_0_0"/>
<dbReference type="InParanoid" id="O84584"/>
<dbReference type="OrthoDB" id="9812547at2"/>
<dbReference type="Proteomes" id="UP000000431">
    <property type="component" value="Chromosome"/>
</dbReference>
<dbReference type="GO" id="GO:0005886">
    <property type="term" value="C:plasma membrane"/>
    <property type="evidence" value="ECO:0007669"/>
    <property type="project" value="UniProtKB-SubCell"/>
</dbReference>
<dbReference type="InterPro" id="IPR050638">
    <property type="entry name" value="AA-Vitamin_Transporters"/>
</dbReference>
<dbReference type="InterPro" id="IPR000620">
    <property type="entry name" value="EamA_dom"/>
</dbReference>
<dbReference type="PANTHER" id="PTHR32322">
    <property type="entry name" value="INNER MEMBRANE TRANSPORTER"/>
    <property type="match status" value="1"/>
</dbReference>
<dbReference type="PANTHER" id="PTHR32322:SF18">
    <property type="entry name" value="S-ADENOSYLMETHIONINE_S-ADENOSYLHOMOCYSTEINE TRANSPORTER"/>
    <property type="match status" value="1"/>
</dbReference>
<dbReference type="Pfam" id="PF00892">
    <property type="entry name" value="EamA"/>
    <property type="match status" value="2"/>
</dbReference>
<dbReference type="SUPFAM" id="SSF103481">
    <property type="entry name" value="Multidrug resistance efflux transporter EmrE"/>
    <property type="match status" value="2"/>
</dbReference>
<name>SAMHT_CHLTR</name>
<accession>O84584</accession>
<sequence>MVAVKALLFACTLQTCVFKPCCDMAIFLIFLNAFIWSSSFALSKSAMEAAAPLFVTGSRMVLAGVVLFGLLLCKRESLRLPRPAIMPIVLLSVIGFYLTNVLEFIGLQGLSSSTACFIYGFSPFTAAFCSYVQLREVVTWKKLGGLSLGLVSYLVYLLFGGSEDVAEWGWQLGLPELLLIAATCLSSYGWTLLRKLGRRCESLSMTAINAYAMVIAGVLSLIHSAVTEVWNPVPVENPLLFLQAIGALVIFSNLICYNLFAKLLRSFSSTFLSFCNLVMPLFASFFGWLLLGESFPPGLLFAVGFMVLGCRLIYHEEFRQGYVLTSE</sequence>
<comment type="function">
    <text evidence="1">Transports S-adenosylmethionine (SAM) and S-adenosylhomocysteine (SAH). Allows bacteria to acquire SAM from the eukaryotic host cell and to likely remove the toxic by-product SAH (By similarity).</text>
</comment>
<comment type="subcellular location">
    <subcellularLocation>
        <location evidence="3">Cell membrane</location>
        <topology evidence="3">Multi-pass membrane protein</topology>
    </subcellularLocation>
</comment>
<comment type="similarity">
    <text evidence="3">Belongs to the drug/metabolite transporter (DMT) superfamily. 10 TMS drug/metabolite exporter (DME) (TC 2.A.7.3) family.</text>
</comment>
<reference key="1">
    <citation type="journal article" date="1998" name="Science">
        <title>Genome sequence of an obligate intracellular pathogen of humans: Chlamydia trachomatis.</title>
        <authorList>
            <person name="Stephens R.S."/>
            <person name="Kalman S."/>
            <person name="Lammel C.J."/>
            <person name="Fan J."/>
            <person name="Marathe R."/>
            <person name="Aravind L."/>
            <person name="Mitchell W.P."/>
            <person name="Olinger L."/>
            <person name="Tatusov R.L."/>
            <person name="Zhao Q."/>
            <person name="Koonin E.V."/>
            <person name="Davis R.W."/>
        </authorList>
    </citation>
    <scope>NUCLEOTIDE SEQUENCE [LARGE SCALE GENOMIC DNA]</scope>
    <source>
        <strain>ATCC VR-885 / DSM 19411 / UW-3/Cx</strain>
    </source>
</reference>
<protein>
    <recommendedName>
        <fullName>S-adenosylmethionine/S-adenosylhomocysteine transporter</fullName>
        <shortName>SAM/SAH transporter</shortName>
        <shortName>SAMHT</shortName>
    </recommendedName>
</protein>
<feature type="chain" id="PRO_0000414248" description="S-adenosylmethionine/S-adenosylhomocysteine transporter">
    <location>
        <begin position="1"/>
        <end position="327"/>
    </location>
</feature>
<feature type="transmembrane region" description="Helical" evidence="2">
    <location>
        <begin position="22"/>
        <end position="42"/>
    </location>
</feature>
<feature type="transmembrane region" description="Helical" evidence="2">
    <location>
        <begin position="53"/>
        <end position="73"/>
    </location>
</feature>
<feature type="transmembrane region" description="Helical" evidence="2">
    <location>
        <begin position="85"/>
        <end position="105"/>
    </location>
</feature>
<feature type="transmembrane region" description="Helical" evidence="2">
    <location>
        <begin position="114"/>
        <end position="134"/>
    </location>
</feature>
<feature type="transmembrane region" description="Helical" evidence="2">
    <location>
        <begin position="143"/>
        <end position="163"/>
    </location>
</feature>
<feature type="transmembrane region" description="Helical" evidence="2">
    <location>
        <begin position="165"/>
        <end position="185"/>
    </location>
</feature>
<feature type="transmembrane region" description="Helical" evidence="2">
    <location>
        <begin position="202"/>
        <end position="222"/>
    </location>
</feature>
<feature type="transmembrane region" description="Helical" evidence="2">
    <location>
        <begin position="240"/>
        <end position="260"/>
    </location>
</feature>
<feature type="transmembrane region" description="Helical" evidence="2">
    <location>
        <begin position="271"/>
        <end position="291"/>
    </location>
</feature>
<feature type="transmembrane region" description="Helical" evidence="2">
    <location>
        <begin position="294"/>
        <end position="314"/>
    </location>
</feature>
<feature type="domain" description="EamA 1">
    <location>
        <begin position="34"/>
        <end position="157"/>
    </location>
</feature>
<feature type="domain" description="EamA 2">
    <location>
        <begin position="189"/>
        <end position="313"/>
    </location>
</feature>
<keyword id="KW-1003">Cell membrane</keyword>
<keyword id="KW-0472">Membrane</keyword>
<keyword id="KW-1185">Reference proteome</keyword>
<keyword id="KW-0677">Repeat</keyword>
<keyword id="KW-0812">Transmembrane</keyword>
<keyword id="KW-1133">Transmembrane helix</keyword>
<keyword id="KW-0813">Transport</keyword>
<organism>
    <name type="scientific">Chlamydia trachomatis serovar D (strain ATCC VR-885 / DSM 19411 / UW-3/Cx)</name>
    <dbReference type="NCBI Taxonomy" id="272561"/>
    <lineage>
        <taxon>Bacteria</taxon>
        <taxon>Pseudomonadati</taxon>
        <taxon>Chlamydiota</taxon>
        <taxon>Chlamydiia</taxon>
        <taxon>Chlamydiales</taxon>
        <taxon>Chlamydiaceae</taxon>
        <taxon>Chlamydia/Chlamydophila group</taxon>
        <taxon>Chlamydia</taxon>
    </lineage>
</organism>
<evidence type="ECO:0000250" key="1"/>
<evidence type="ECO:0000255" key="2"/>
<evidence type="ECO:0000305" key="3"/>
<proteinExistence type="inferred from homology"/>